<keyword id="KW-0281">Fimbrium</keyword>
<keyword id="KW-1185">Reference proteome</keyword>
<keyword id="KW-0964">Secreted</keyword>
<keyword id="KW-0732">Signal</keyword>
<dbReference type="EMBL" id="AE014075">
    <property type="protein sequence ID" value="AAN82034.1"/>
    <property type="status" value="ALT_INIT"/>
    <property type="molecule type" value="Genomic_DNA"/>
</dbReference>
<dbReference type="EMBL" id="AE014075">
    <property type="protein sequence ID" value="AAN83604.1"/>
    <property type="status" value="ALT_INIT"/>
    <property type="molecule type" value="Genomic_DNA"/>
</dbReference>
<dbReference type="RefSeq" id="WP_000597713.1">
    <property type="nucleotide sequence ID" value="NZ_CP051263.1"/>
</dbReference>
<dbReference type="SMR" id="P62533"/>
<dbReference type="IntAct" id="P62533">
    <property type="interactions" value="1"/>
</dbReference>
<dbReference type="MINT" id="P62533"/>
<dbReference type="STRING" id="199310.c3586"/>
<dbReference type="KEGG" id="ecc:c3586"/>
<dbReference type="KEGG" id="ecc:c5182"/>
<dbReference type="eggNOG" id="COG3539">
    <property type="taxonomic scope" value="Bacteria"/>
</dbReference>
<dbReference type="HOGENOM" id="CLU_088965_3_3_6"/>
<dbReference type="Proteomes" id="UP000001410">
    <property type="component" value="Chromosome"/>
</dbReference>
<dbReference type="GO" id="GO:0005576">
    <property type="term" value="C:extracellular region"/>
    <property type="evidence" value="ECO:0007669"/>
    <property type="project" value="UniProtKB-SubCell"/>
</dbReference>
<dbReference type="GO" id="GO:0009289">
    <property type="term" value="C:pilus"/>
    <property type="evidence" value="ECO:0007669"/>
    <property type="project" value="UniProtKB-SubCell"/>
</dbReference>
<dbReference type="GO" id="GO:0043709">
    <property type="term" value="P:cell adhesion involved in single-species biofilm formation"/>
    <property type="evidence" value="ECO:0007669"/>
    <property type="project" value="TreeGrafter"/>
</dbReference>
<dbReference type="Gene3D" id="2.60.40.1090">
    <property type="entry name" value="Fimbrial-type adhesion domain"/>
    <property type="match status" value="1"/>
</dbReference>
<dbReference type="InterPro" id="IPR000259">
    <property type="entry name" value="Adhesion_dom_fimbrial"/>
</dbReference>
<dbReference type="InterPro" id="IPR036937">
    <property type="entry name" value="Adhesion_dom_fimbrial_sf"/>
</dbReference>
<dbReference type="InterPro" id="IPR008966">
    <property type="entry name" value="Adhesion_dom_sf"/>
</dbReference>
<dbReference type="InterPro" id="IPR050263">
    <property type="entry name" value="Bact_Fimbrial_Adh_Pro"/>
</dbReference>
<dbReference type="PANTHER" id="PTHR33420:SF26">
    <property type="entry name" value="FIMBRIAL SUBUNIT"/>
    <property type="match status" value="1"/>
</dbReference>
<dbReference type="PANTHER" id="PTHR33420">
    <property type="entry name" value="FIMBRIAL SUBUNIT ELFA-RELATED"/>
    <property type="match status" value="1"/>
</dbReference>
<dbReference type="Pfam" id="PF00419">
    <property type="entry name" value="Fimbrial"/>
    <property type="match status" value="1"/>
</dbReference>
<dbReference type="SUPFAM" id="SSF49401">
    <property type="entry name" value="Bacterial adhesins"/>
    <property type="match status" value="1"/>
</dbReference>
<comment type="function">
    <text evidence="1">Adapter that links the pilus rod to the base of the tip fibrillum. Regulates the length of the tip fibrillum and joins it to the pilus rod. Pili are polar filaments radiating from the surface of the bacterium to a length of 0.5-1.5 micrometers and numbering 100-300 per cell, and enable bacteria to colonize the epithelium of specific host organs (By similarity).</text>
</comment>
<comment type="subcellular location">
    <subcellularLocation>
        <location evidence="1">Secreted</location>
    </subcellularLocation>
    <subcellularLocation>
        <location evidence="1">Fimbrium</location>
    </subcellularLocation>
</comment>
<comment type="miscellaneous">
    <text evidence="1">Strains of E.coli that cause infection of the human urinary tract produce pap-pili which are hair-like appendages consisting of about 1000 helically arranged subunits of the protein PapA. These pili mediate binding to digalactoside-containing glycolipids present on the epithelial cells which line the urinary tract (By similarity).</text>
</comment>
<comment type="sequence caution" evidence="3">
    <conflict type="erroneous initiation">
        <sequence resource="EMBL-CDS" id="AAN82034"/>
    </conflict>
</comment>
<comment type="sequence caution" evidence="3">
    <conflict type="erroneous initiation">
        <sequence resource="EMBL-CDS" id="AAN83604"/>
    </conflict>
</comment>
<name>PAPK_ECOL6</name>
<accession>P62533</accession>
<accession>P42190</accession>
<protein>
    <recommendedName>
        <fullName>Fimbrial adapter PapK</fullName>
    </recommendedName>
</protein>
<organism>
    <name type="scientific">Escherichia coli O6:H1 (strain CFT073 / ATCC 700928 / UPEC)</name>
    <dbReference type="NCBI Taxonomy" id="199310"/>
    <lineage>
        <taxon>Bacteria</taxon>
        <taxon>Pseudomonadati</taxon>
        <taxon>Pseudomonadota</taxon>
        <taxon>Gammaproteobacteria</taxon>
        <taxon>Enterobacterales</taxon>
        <taxon>Enterobacteriaceae</taxon>
        <taxon>Escherichia</taxon>
    </lineage>
</organism>
<feature type="signal peptide" evidence="2">
    <location>
        <begin position="1"/>
        <end position="21"/>
    </location>
</feature>
<feature type="chain" id="PRO_0000022007" description="Fimbrial adapter PapK">
    <location>
        <begin position="22"/>
        <end position="178"/>
    </location>
</feature>
<sequence length="178" mass="18872">MIKSTGALLLFAALSAGQAIASDVAFRGNLLDRPCHVSGDSLNKHVVFKTRASRDFWYPPGRSPTESFVIRLENCHATAVGKIVTLTFKGTEEAALPGHLKVTGVNAGRLGIALLDTDGSSLLKPGTSHNKGQGEKVTGNSLELPFGAYVVATPEALRTKSVVPGDYEATATFELTYR</sequence>
<reference key="1">
    <citation type="journal article" date="2002" name="Proc. Natl. Acad. Sci. U.S.A.">
        <title>Extensive mosaic structure revealed by the complete genome sequence of uropathogenic Escherichia coli.</title>
        <authorList>
            <person name="Welch R.A."/>
            <person name="Burland V."/>
            <person name="Plunkett G. III"/>
            <person name="Redford P."/>
            <person name="Roesch P."/>
            <person name="Rasko D."/>
            <person name="Buckles E.L."/>
            <person name="Liou S.-R."/>
            <person name="Boutin A."/>
            <person name="Hackett J."/>
            <person name="Stroud D."/>
            <person name="Mayhew G.F."/>
            <person name="Rose D.J."/>
            <person name="Zhou S."/>
            <person name="Schwartz D.C."/>
            <person name="Perna N.T."/>
            <person name="Mobley H.L.T."/>
            <person name="Donnenberg M.S."/>
            <person name="Blattner F.R."/>
        </authorList>
    </citation>
    <scope>NUCLEOTIDE SEQUENCE [LARGE SCALE GENOMIC DNA]</scope>
    <source>
        <strain>CFT073 / ATCC 700928 / UPEC</strain>
    </source>
</reference>
<evidence type="ECO:0000250" key="1"/>
<evidence type="ECO:0000255" key="2"/>
<evidence type="ECO:0000305" key="3"/>
<gene>
    <name type="primary">papK</name>
    <name type="ordered locus">c3586</name>
</gene>
<gene>
    <name type="primary">papK2</name>
    <name type="ordered locus">c5182</name>
</gene>
<proteinExistence type="inferred from homology"/>